<gene>
    <name type="primary">NDK1</name>
</gene>
<organism>
    <name type="scientific">Candida albicans</name>
    <name type="common">Yeast</name>
    <dbReference type="NCBI Taxonomy" id="5476"/>
    <lineage>
        <taxon>Eukaryota</taxon>
        <taxon>Fungi</taxon>
        <taxon>Dikarya</taxon>
        <taxon>Ascomycota</taxon>
        <taxon>Saccharomycotina</taxon>
        <taxon>Pichiomycetes</taxon>
        <taxon>Debaryomycetaceae</taxon>
        <taxon>Candida/Lodderomyces clade</taxon>
        <taxon>Candida</taxon>
    </lineage>
</organism>
<dbReference type="EC" id="2.7.4.6"/>
<dbReference type="GO" id="GO:0005737">
    <property type="term" value="C:cytoplasm"/>
    <property type="evidence" value="ECO:0007669"/>
    <property type="project" value="UniProtKB-SubCell"/>
</dbReference>
<dbReference type="GO" id="GO:0005524">
    <property type="term" value="F:ATP binding"/>
    <property type="evidence" value="ECO:0007669"/>
    <property type="project" value="UniProtKB-KW"/>
</dbReference>
<dbReference type="GO" id="GO:0046872">
    <property type="term" value="F:metal ion binding"/>
    <property type="evidence" value="ECO:0007669"/>
    <property type="project" value="UniProtKB-KW"/>
</dbReference>
<dbReference type="GO" id="GO:0004550">
    <property type="term" value="F:nucleoside diphosphate kinase activity"/>
    <property type="evidence" value="ECO:0007669"/>
    <property type="project" value="UniProtKB-EC"/>
</dbReference>
<dbReference type="GO" id="GO:0009117">
    <property type="term" value="P:nucleotide metabolic process"/>
    <property type="evidence" value="ECO:0007669"/>
    <property type="project" value="UniProtKB-KW"/>
</dbReference>
<dbReference type="Gene3D" id="3.30.70.141">
    <property type="entry name" value="Nucleoside diphosphate kinase-like domain"/>
    <property type="match status" value="1"/>
</dbReference>
<dbReference type="InterPro" id="IPR034907">
    <property type="entry name" value="NDK-like_dom"/>
</dbReference>
<dbReference type="InterPro" id="IPR036850">
    <property type="entry name" value="NDK-like_dom_sf"/>
</dbReference>
<dbReference type="InterPro" id="IPR023005">
    <property type="entry name" value="Nucleoside_diP_kinase_AS"/>
</dbReference>
<dbReference type="Pfam" id="PF00334">
    <property type="entry name" value="NDK"/>
    <property type="match status" value="1"/>
</dbReference>
<dbReference type="SUPFAM" id="SSF54919">
    <property type="entry name" value="Nucleoside diphosphate kinase, NDK"/>
    <property type="match status" value="1"/>
</dbReference>
<dbReference type="PROSITE" id="PS00469">
    <property type="entry name" value="NDPK"/>
    <property type="match status" value="1"/>
</dbReference>
<dbReference type="PROSITE" id="PS51374">
    <property type="entry name" value="NDPK_LIKE"/>
    <property type="match status" value="1"/>
</dbReference>
<comment type="function">
    <text>Major role in the synthesis of nucleoside triphosphates other than ATP. The ATP gamma phosphate is transferred to the NDP beta phosphate via a ping-pong mechanism, using a phosphorylated active-site intermediate.</text>
</comment>
<comment type="catalytic activity">
    <reaction evidence="2">
        <text>a 2'-deoxyribonucleoside 5'-diphosphate + ATP = a 2'-deoxyribonucleoside 5'-triphosphate + ADP</text>
        <dbReference type="Rhea" id="RHEA:44640"/>
        <dbReference type="ChEBI" id="CHEBI:30616"/>
        <dbReference type="ChEBI" id="CHEBI:61560"/>
        <dbReference type="ChEBI" id="CHEBI:73316"/>
        <dbReference type="ChEBI" id="CHEBI:456216"/>
        <dbReference type="EC" id="2.7.4.6"/>
    </reaction>
</comment>
<comment type="catalytic activity">
    <reaction evidence="2">
        <text>a ribonucleoside 5'-diphosphate + ATP = a ribonucleoside 5'-triphosphate + ADP</text>
        <dbReference type="Rhea" id="RHEA:18113"/>
        <dbReference type="ChEBI" id="CHEBI:30616"/>
        <dbReference type="ChEBI" id="CHEBI:57930"/>
        <dbReference type="ChEBI" id="CHEBI:61557"/>
        <dbReference type="ChEBI" id="CHEBI:456216"/>
        <dbReference type="EC" id="2.7.4.6"/>
    </reaction>
</comment>
<comment type="cofactor">
    <cofactor evidence="1">
        <name>Mg(2+)</name>
        <dbReference type="ChEBI" id="CHEBI:18420"/>
    </cofactor>
</comment>
<comment type="subunit">
    <text>Homohexamer.</text>
</comment>
<comment type="subcellular location">
    <subcellularLocation>
        <location>Cytoplasm</location>
    </subcellularLocation>
</comment>
<comment type="similarity">
    <text evidence="3">Belongs to the NDK family.</text>
</comment>
<feature type="chain" id="PRO_0000137149" description="Nucleoside diphosphate kinase">
    <location>
        <begin position="1" status="less than"/>
        <end position="21" status="greater than"/>
    </location>
</feature>
<feature type="active site" description="Pros-phosphohistidine intermediate" evidence="2">
    <location>
        <position position="4"/>
    </location>
</feature>
<feature type="non-terminal residue">
    <location>
        <position position="1"/>
    </location>
</feature>
<feature type="non-terminal residue">
    <location>
        <position position="21"/>
    </location>
</feature>
<reference key="1">
    <citation type="journal article" date="1995" name="Arch. Biochem. Biophys.">
        <title>Candida albicans nucleoside-diphosphate kinase: purification and characterization.</title>
        <authorList>
            <person name="Biondi R.M."/>
            <person name="Veron M."/>
            <person name="Walz K."/>
            <person name="Passeron S."/>
        </authorList>
    </citation>
    <scope>PROTEIN SEQUENCE</scope>
    <scope>CHARACTERIZATION</scope>
</reference>
<accession>Q9UR66</accession>
<protein>
    <recommendedName>
        <fullName>Nucleoside diphosphate kinase</fullName>
        <shortName>NDK</shortName>
        <shortName>NDP kinase</shortName>
        <shortName>NDPK</shortName>
        <ecNumber>2.7.4.6</ecNumber>
    </recommendedName>
</protein>
<evidence type="ECO:0000250" key="1"/>
<evidence type="ECO:0000255" key="2">
    <source>
        <dbReference type="PROSITE-ProRule" id="PRU10030"/>
    </source>
</evidence>
<evidence type="ECO:0000305" key="3"/>
<sequence length="21" mass="2379">NVCHGSDSVESANKEIDLWFK</sequence>
<proteinExistence type="evidence at protein level"/>
<keyword id="KW-0067">ATP-binding</keyword>
<keyword id="KW-0963">Cytoplasm</keyword>
<keyword id="KW-0903">Direct protein sequencing</keyword>
<keyword id="KW-0418">Kinase</keyword>
<keyword id="KW-0460">Magnesium</keyword>
<keyword id="KW-0479">Metal-binding</keyword>
<keyword id="KW-0546">Nucleotide metabolism</keyword>
<keyword id="KW-0547">Nucleotide-binding</keyword>
<keyword id="KW-0597">Phosphoprotein</keyword>
<keyword id="KW-0808">Transferase</keyword>
<name>NDK_CANAX</name>